<evidence type="ECO:0000269" key="1">
    <source>
    </source>
</evidence>
<evidence type="ECO:0000269" key="2">
    <source>
    </source>
</evidence>
<evidence type="ECO:0000269" key="3">
    <source>
    </source>
</evidence>
<evidence type="ECO:0000269" key="4">
    <source>
    </source>
</evidence>
<evidence type="ECO:0000269" key="5">
    <source>
    </source>
</evidence>
<evidence type="ECO:0000269" key="6">
    <source>
    </source>
</evidence>
<evidence type="ECO:0000269" key="7">
    <source>
    </source>
</evidence>
<evidence type="ECO:0000269" key="8">
    <source>
    </source>
</evidence>
<evidence type="ECO:0000305" key="9"/>
<evidence type="ECO:0000305" key="10">
    <source>
    </source>
</evidence>
<evidence type="ECO:0007744" key="11">
    <source>
        <dbReference type="PDB" id="2J1N"/>
    </source>
</evidence>
<evidence type="ECO:0007829" key="12">
    <source>
        <dbReference type="PDB" id="2J1N"/>
    </source>
</evidence>
<evidence type="ECO:0007829" key="13">
    <source>
        <dbReference type="PDB" id="2J4U"/>
    </source>
</evidence>
<comment type="function">
    <text>Forms pores that allow passive diffusion of small molecules across the outer membrane.</text>
</comment>
<comment type="function">
    <text evidence="10">(Microbial infection) Supports colicin E5 entry in the absence of its major receptor OmpF.</text>
</comment>
<comment type="function">
    <text evidence="3">(Microbial infection) A mixed OmpC-OmpF heterotrimer is the outer membrane receptor for toxin CdiA-EC536; polymorphisms in extracellular loops 4 and 5 of OmpC confer susceptibility to CdiA-EC536-mediated toxicity.</text>
</comment>
<comment type="subunit">
    <text evidence="1 2">Homotrimer (PubMed:16949612, PubMed:2464593). Forms mixed heterotrimers with OmpF and with PhoE; other mixed heterotrimers are also probable (PubMed:2464593).</text>
</comment>
<comment type="interaction">
    <interactant intactId="EBI-371155">
        <id>P06996</id>
    </interactant>
    <interactant intactId="EBI-547165">
        <id>P0C0V0</id>
        <label>degP</label>
    </interactant>
    <organismsDiffer>false</organismsDiffer>
    <experiments>7</experiments>
</comment>
<comment type="interaction">
    <interactant intactId="EBI-371155">
        <id>P06996</id>
    </interactant>
    <interactant intactId="EBI-1128511">
        <id>P76506</id>
        <label>mlaA</label>
    </interactant>
    <organismsDiffer>false</organismsDiffer>
    <experiments>4</experiments>
</comment>
<comment type="subcellular location">
    <subcellularLocation>
        <location evidence="2">Cell outer membrane</location>
        <topology evidence="1">Multi-pass membrane protein</topology>
    </subcellularLocation>
</comment>
<comment type="induction">
    <text evidence="2 4 5">By growth in high osmolarity conditions (high sugar or salt) under control of OmpR (at protein level) (PubMed:2464593, PubMed:3010044). In the presence of 0.2 M NaCl, 2.0 mM sodium cholate (bile salts) decreases expression from the ompC promoter; how this is mediated is unknown (PubMed:28423182).</text>
</comment>
<comment type="domain">
    <text evidence="1">Loop L3 (residues 116-133) extends along the inner side of the beta barrel wall and may constrict the pore mid-length.</text>
</comment>
<comment type="disruption phenotype">
    <text evidence="3">Deletion of both ompC and ompF confers resistance to colicin E5 and to the toxic activity of CdiA-EC536.</text>
</comment>
<comment type="miscellaneous">
    <text>Binds 1 Mg(2+) per subunit; could be Ca(2+) in vivo.</text>
</comment>
<comment type="similarity">
    <text evidence="9">Belongs to the Gram-negative porin family.</text>
</comment>
<dbReference type="EMBL" id="K00541">
    <property type="protein sequence ID" value="AAA24243.1"/>
    <property type="molecule type" value="Genomic_DNA"/>
</dbReference>
<dbReference type="EMBL" id="U00096">
    <property type="protein sequence ID" value="AAC75275.1"/>
    <property type="molecule type" value="Genomic_DNA"/>
</dbReference>
<dbReference type="EMBL" id="AP009048">
    <property type="protein sequence ID" value="BAA15998.1"/>
    <property type="molecule type" value="Genomic_DNA"/>
</dbReference>
<dbReference type="EMBL" id="U00008">
    <property type="protein sequence ID" value="AAA16412.1"/>
    <property type="molecule type" value="Genomic_DNA"/>
</dbReference>
<dbReference type="PIR" id="A20867">
    <property type="entry name" value="MMECPC"/>
</dbReference>
<dbReference type="RefSeq" id="NP_416719.1">
    <property type="nucleotide sequence ID" value="NC_000913.3"/>
</dbReference>
<dbReference type="RefSeq" id="WP_000865568.1">
    <property type="nucleotide sequence ID" value="NZ_SSZK01000030.1"/>
</dbReference>
<dbReference type="PDB" id="2J1N">
    <property type="method" value="X-ray"/>
    <property type="resolution" value="2.00 A"/>
    <property type="chains" value="A/B/C=22-367"/>
</dbReference>
<dbReference type="PDB" id="2J4U">
    <property type="method" value="X-ray"/>
    <property type="resolution" value="2.99 A"/>
    <property type="chains" value="P/Q/R/U/V/W=22-367"/>
</dbReference>
<dbReference type="PDB" id="2ZLE">
    <property type="method" value="EM"/>
    <property type="resolution" value="28.00 A"/>
    <property type="chains" value="D=22-367"/>
</dbReference>
<dbReference type="PDB" id="4A8D">
    <property type="method" value="EM"/>
    <property type="resolution" value="28.00 A"/>
    <property type="chains" value="M=22-366"/>
</dbReference>
<dbReference type="PDB" id="8I8R">
    <property type="method" value="EM"/>
    <property type="resolution" value="2.93 A"/>
    <property type="chains" value="A/B/C=22-367"/>
</dbReference>
<dbReference type="PDB" id="8I8X">
    <property type="method" value="EM"/>
    <property type="resolution" value="3.25 A"/>
    <property type="chains" value="A/B/C=22-367"/>
</dbReference>
<dbReference type="PDBsum" id="2J1N"/>
<dbReference type="PDBsum" id="2J4U"/>
<dbReference type="PDBsum" id="2ZLE"/>
<dbReference type="PDBsum" id="4A8D"/>
<dbReference type="PDBsum" id="8I8R"/>
<dbReference type="PDBsum" id="8I8X"/>
<dbReference type="EMDB" id="EMD-35250"/>
<dbReference type="EMDB" id="EMD-35253"/>
<dbReference type="SMR" id="P06996"/>
<dbReference type="BioGRID" id="4261917">
    <property type="interactions" value="276"/>
</dbReference>
<dbReference type="DIP" id="DIP-10397N"/>
<dbReference type="FunCoup" id="P06996">
    <property type="interactions" value="400"/>
</dbReference>
<dbReference type="IntAct" id="P06996">
    <property type="interactions" value="9"/>
</dbReference>
<dbReference type="MINT" id="P06996"/>
<dbReference type="STRING" id="511145.b2215"/>
<dbReference type="DrugBank" id="DB01017">
    <property type="generic name" value="Minocycline"/>
</dbReference>
<dbReference type="TCDB" id="1.B.1.1.3">
    <property type="family name" value="the general bacterial porin (gbp) family"/>
</dbReference>
<dbReference type="jPOST" id="P06996"/>
<dbReference type="PaxDb" id="511145-b2215"/>
<dbReference type="EnsemblBacteria" id="AAC75275">
    <property type="protein sequence ID" value="AAC75275"/>
    <property type="gene ID" value="b2215"/>
</dbReference>
<dbReference type="GeneID" id="946716"/>
<dbReference type="KEGG" id="ecj:JW2203"/>
<dbReference type="KEGG" id="eco:b2215"/>
<dbReference type="KEGG" id="ecoc:C3026_12375"/>
<dbReference type="PATRIC" id="fig|1411691.4.peg.20"/>
<dbReference type="EchoBASE" id="EB0664"/>
<dbReference type="eggNOG" id="COG3203">
    <property type="taxonomic scope" value="Bacteria"/>
</dbReference>
<dbReference type="HOGENOM" id="CLU_058202_0_0_6"/>
<dbReference type="InParanoid" id="P06996"/>
<dbReference type="OMA" id="AMYTQSY"/>
<dbReference type="OrthoDB" id="7055111at2"/>
<dbReference type="PhylomeDB" id="P06996"/>
<dbReference type="BioCyc" id="EcoCyc:EG10670-MONOMER"/>
<dbReference type="BioCyc" id="MetaCyc:EG10670-MONOMER"/>
<dbReference type="EvolutionaryTrace" id="P06996"/>
<dbReference type="PHI-base" id="PHI:7024"/>
<dbReference type="PRO" id="PR:P06996"/>
<dbReference type="Proteomes" id="UP000000625">
    <property type="component" value="Chromosome"/>
</dbReference>
<dbReference type="GO" id="GO:0009279">
    <property type="term" value="C:cell outer membrane"/>
    <property type="evidence" value="ECO:0000314"/>
    <property type="project" value="EcoCyc"/>
</dbReference>
<dbReference type="GO" id="GO:0046930">
    <property type="term" value="C:pore complex"/>
    <property type="evidence" value="ECO:0000318"/>
    <property type="project" value="GO_Central"/>
</dbReference>
<dbReference type="GO" id="GO:0042802">
    <property type="term" value="F:identical protein binding"/>
    <property type="evidence" value="ECO:0000314"/>
    <property type="project" value="EcoCyc"/>
</dbReference>
<dbReference type="GO" id="GO:0046872">
    <property type="term" value="F:metal ion binding"/>
    <property type="evidence" value="ECO:0007669"/>
    <property type="project" value="UniProtKB-KW"/>
</dbReference>
<dbReference type="GO" id="GO:0015288">
    <property type="term" value="F:porin activity"/>
    <property type="evidence" value="ECO:0000314"/>
    <property type="project" value="EcoCyc"/>
</dbReference>
<dbReference type="GO" id="GO:0001618">
    <property type="term" value="F:virus receptor activity"/>
    <property type="evidence" value="ECO:0000314"/>
    <property type="project" value="CACAO"/>
</dbReference>
<dbReference type="GO" id="GO:0006974">
    <property type="term" value="P:DNA damage response"/>
    <property type="evidence" value="ECO:0000270"/>
    <property type="project" value="EcoliWiki"/>
</dbReference>
<dbReference type="GO" id="GO:0120010">
    <property type="term" value="P:intermembrane phospholipid transfer"/>
    <property type="evidence" value="ECO:0000269"/>
    <property type="project" value="EcoCyc"/>
</dbReference>
<dbReference type="GO" id="GO:0034220">
    <property type="term" value="P:monoatomic ion transmembrane transport"/>
    <property type="evidence" value="ECO:0007669"/>
    <property type="project" value="InterPro"/>
</dbReference>
<dbReference type="GO" id="GO:0046813">
    <property type="term" value="P:receptor-mediated virion attachment to host cell"/>
    <property type="evidence" value="ECO:0000314"/>
    <property type="project" value="CACAO"/>
</dbReference>
<dbReference type="FunFam" id="2.40.160.10:FF:000002">
    <property type="entry name" value="Outer membrane porin F"/>
    <property type="match status" value="1"/>
</dbReference>
<dbReference type="Gene3D" id="2.40.160.10">
    <property type="entry name" value="Porin"/>
    <property type="match status" value="1"/>
</dbReference>
<dbReference type="InterPro" id="IPR050298">
    <property type="entry name" value="Gram-neg_bact_OMP"/>
</dbReference>
<dbReference type="InterPro" id="IPR023614">
    <property type="entry name" value="Porin_dom_sf"/>
</dbReference>
<dbReference type="InterPro" id="IPR001897">
    <property type="entry name" value="Porin_gammaproteobac"/>
</dbReference>
<dbReference type="InterPro" id="IPR001702">
    <property type="entry name" value="Porin_Gram-ve"/>
</dbReference>
<dbReference type="InterPro" id="IPR013793">
    <property type="entry name" value="Porin_Gram-ve_CS"/>
</dbReference>
<dbReference type="NCBIfam" id="NF007841">
    <property type="entry name" value="PRK10554.1"/>
    <property type="match status" value="1"/>
</dbReference>
<dbReference type="PANTHER" id="PTHR34501:SF1">
    <property type="entry name" value="OUTER MEMBRANE PORIN C"/>
    <property type="match status" value="1"/>
</dbReference>
<dbReference type="PANTHER" id="PTHR34501">
    <property type="entry name" value="PROTEIN YDDL-RELATED"/>
    <property type="match status" value="1"/>
</dbReference>
<dbReference type="Pfam" id="PF00267">
    <property type="entry name" value="Porin_1"/>
    <property type="match status" value="1"/>
</dbReference>
<dbReference type="PRINTS" id="PR00183">
    <property type="entry name" value="ECOLIPORIN"/>
</dbReference>
<dbReference type="PRINTS" id="PR00182">
    <property type="entry name" value="ECOLNEIPORIN"/>
</dbReference>
<dbReference type="SUPFAM" id="SSF56935">
    <property type="entry name" value="Porins"/>
    <property type="match status" value="1"/>
</dbReference>
<dbReference type="PROSITE" id="PS00576">
    <property type="entry name" value="GRAM_NEG_PORIN"/>
    <property type="match status" value="1"/>
</dbReference>
<feature type="signal peptide" evidence="6 7 8">
    <location>
        <begin position="1"/>
        <end position="21"/>
    </location>
</feature>
<feature type="chain" id="PRO_0000025230" description="Outer membrane porin C">
    <location>
        <begin position="22"/>
        <end position="367"/>
    </location>
</feature>
<feature type="topological domain" description="Periplasmic" evidence="1">
    <location>
        <begin position="22"/>
        <end position="33"/>
    </location>
</feature>
<feature type="transmembrane region" description="Beta stranded">
    <location>
        <begin position="34"/>
        <end position="42"/>
    </location>
</feature>
<feature type="topological domain" description="Extracellular" evidence="1">
    <location>
        <begin position="43"/>
        <end position="53"/>
    </location>
</feature>
<feature type="transmembrane region" description="Beta stranded">
    <location>
        <begin position="54"/>
        <end position="63"/>
    </location>
</feature>
<feature type="topological domain" description="Periplasmic" evidence="1">
    <location>
        <begin position="64"/>
        <end position="73"/>
    </location>
</feature>
<feature type="transmembrane region" description="Beta stranded">
    <location>
        <begin position="74"/>
        <end position="84"/>
    </location>
</feature>
<feature type="topological domain" description="Extracellular" evidence="1">
    <location>
        <begin position="85"/>
        <end position="91"/>
    </location>
</feature>
<feature type="transmembrane region" description="Beta stranded">
    <location>
        <begin position="92"/>
        <end position="101"/>
    </location>
</feature>
<feature type="topological domain" description="Periplasmic" evidence="1">
    <location>
        <begin position="102"/>
        <end position="106"/>
    </location>
</feature>
<feature type="transmembrane region" description="Beta stranded">
    <location>
        <begin position="107"/>
        <end position="115"/>
    </location>
</feature>
<feature type="topological domain" description="Extracellular" evidence="1">
    <location>
        <begin position="116"/>
        <end position="141"/>
    </location>
</feature>
<feature type="transmembrane region" description="Beta stranded">
    <location>
        <begin position="142"/>
        <end position="154"/>
    </location>
</feature>
<feature type="topological domain" description="Periplasmic" evidence="1">
    <location>
        <begin position="155"/>
        <end position="163"/>
    </location>
</feature>
<feature type="transmembrane region" description="Beta stranded">
    <location>
        <begin position="164"/>
        <end position="171"/>
    </location>
</feature>
<feature type="topological domain" description="Extracellular" evidence="1">
    <location>
        <begin position="172"/>
        <end position="200"/>
    </location>
</feature>
<feature type="transmembrane region" description="Beta stranded">
    <location>
        <begin position="201"/>
        <end position="207"/>
    </location>
</feature>
<feature type="topological domain" description="Periplasmic" evidence="1">
    <location>
        <begin position="208"/>
        <end position="211"/>
    </location>
</feature>
<feature type="transmembrane region" description="Beta stranded">
    <location>
        <begin position="212"/>
        <end position="219"/>
    </location>
</feature>
<feature type="topological domain" description="Extracellular" evidence="1">
    <location>
        <begin position="220"/>
        <end position="241"/>
    </location>
</feature>
<feature type="transmembrane region" description="Beta stranded">
    <location>
        <begin position="242"/>
        <end position="248"/>
    </location>
</feature>
<feature type="topological domain" description="Periplasmic" evidence="1">
    <location>
        <begin position="249"/>
        <end position="252"/>
    </location>
</feature>
<feature type="transmembrane region" description="Beta stranded">
    <location>
        <begin position="253"/>
        <end position="260"/>
    </location>
</feature>
<feature type="topological domain" description="Extracellular" evidence="1">
    <location>
        <begin position="261"/>
        <end position="269"/>
    </location>
</feature>
<feature type="transmembrane region" description="Beta stranded">
    <location>
        <begin position="270"/>
        <end position="286"/>
    </location>
</feature>
<feature type="topological domain" description="Periplasmic" evidence="1">
    <location>
        <begin position="287"/>
        <end position="291"/>
    </location>
</feature>
<feature type="transmembrane region" description="Beta stranded">
    <location>
        <begin position="292"/>
        <end position="299"/>
    </location>
</feature>
<feature type="topological domain" description="Extracellular" evidence="1">
    <location>
        <begin position="300"/>
        <end position="318"/>
    </location>
</feature>
<feature type="transmembrane region" description="Beta stranded">
    <location>
        <begin position="319"/>
        <end position="326"/>
    </location>
</feature>
<feature type="topological domain" description="Periplasmic" evidence="1">
    <location>
        <begin position="327"/>
        <end position="330"/>
    </location>
</feature>
<feature type="transmembrane region" description="Beta stranded">
    <location>
        <begin position="331"/>
        <end position="338"/>
    </location>
</feature>
<feature type="topological domain" description="Extracellular" evidence="1">
    <location>
        <begin position="339"/>
        <end position="358"/>
    </location>
</feature>
<feature type="transmembrane region" description="Beta stranded">
    <location>
        <begin position="359"/>
        <end position="366"/>
    </location>
</feature>
<feature type="topological domain" description="Periplasmic" evidence="1">
    <location>
        <position position="367"/>
    </location>
</feature>
<feature type="region of interest" description="Loop L3; may constrict the pore">
    <location>
        <begin position="116"/>
        <end position="133"/>
    </location>
</feature>
<feature type="binding site" evidence="11">
    <location>
        <position position="340"/>
    </location>
    <ligand>
        <name>Mg(2+)</name>
        <dbReference type="ChEBI" id="CHEBI:18420"/>
    </ligand>
</feature>
<feature type="binding site" evidence="11">
    <location>
        <position position="342"/>
    </location>
    <ligand>
        <name>Mg(2+)</name>
        <dbReference type="ChEBI" id="CHEBI:18420"/>
    </ligand>
</feature>
<feature type="binding site" evidence="11">
    <location>
        <position position="355"/>
    </location>
    <ligand>
        <name>Mg(2+)</name>
        <dbReference type="ChEBI" id="CHEBI:18420"/>
    </ligand>
</feature>
<feature type="strand" evidence="12">
    <location>
        <begin position="23"/>
        <end position="27"/>
    </location>
</feature>
<feature type="strand" evidence="12">
    <location>
        <begin position="30"/>
        <end position="44"/>
    </location>
</feature>
<feature type="turn" evidence="12">
    <location>
        <begin position="48"/>
        <end position="50"/>
    </location>
</feature>
<feature type="strand" evidence="12">
    <location>
        <begin position="56"/>
        <end position="85"/>
    </location>
</feature>
<feature type="strand" evidence="12">
    <location>
        <begin position="92"/>
        <end position="103"/>
    </location>
</feature>
<feature type="turn" evidence="12">
    <location>
        <begin position="104"/>
        <end position="106"/>
    </location>
</feature>
<feature type="strand" evidence="12">
    <location>
        <begin position="107"/>
        <end position="115"/>
    </location>
</feature>
<feature type="helix" evidence="12">
    <location>
        <begin position="119"/>
        <end position="122"/>
    </location>
</feature>
<feature type="helix" evidence="12">
    <location>
        <begin position="123"/>
        <end position="125"/>
    </location>
</feature>
<feature type="strand" evidence="12">
    <location>
        <begin position="129"/>
        <end position="131"/>
    </location>
</feature>
<feature type="strand" evidence="12">
    <location>
        <begin position="138"/>
        <end position="140"/>
    </location>
</feature>
<feature type="strand" evidence="12">
    <location>
        <begin position="143"/>
        <end position="155"/>
    </location>
</feature>
<feature type="helix" evidence="12">
    <location>
        <begin position="156"/>
        <end position="159"/>
    </location>
</feature>
<feature type="strand" evidence="12">
    <location>
        <begin position="164"/>
        <end position="171"/>
    </location>
</feature>
<feature type="strand" evidence="13">
    <location>
        <begin position="176"/>
        <end position="182"/>
    </location>
</feature>
<feature type="strand" evidence="12">
    <location>
        <begin position="184"/>
        <end position="186"/>
    </location>
</feature>
<feature type="helix" evidence="12">
    <location>
        <begin position="193"/>
        <end position="195"/>
    </location>
</feature>
<feature type="strand" evidence="12">
    <location>
        <begin position="200"/>
        <end position="209"/>
    </location>
</feature>
<feature type="strand" evidence="12">
    <location>
        <begin position="212"/>
        <end position="222"/>
    </location>
</feature>
<feature type="turn" evidence="12">
    <location>
        <begin position="225"/>
        <end position="227"/>
    </location>
</feature>
<feature type="strand" evidence="13">
    <location>
        <begin position="229"/>
        <end position="233"/>
    </location>
</feature>
<feature type="strand" evidence="12">
    <location>
        <begin position="237"/>
        <end position="250"/>
    </location>
</feature>
<feature type="strand" evidence="12">
    <location>
        <begin position="253"/>
        <end position="264"/>
    </location>
</feature>
<feature type="strand" evidence="12">
    <location>
        <begin position="271"/>
        <end position="273"/>
    </location>
</feature>
<feature type="strand" evidence="12">
    <location>
        <begin position="275"/>
        <end position="286"/>
    </location>
</feature>
<feature type="strand" evidence="12">
    <location>
        <begin position="291"/>
        <end position="305"/>
    </location>
</feature>
<feature type="turn" evidence="13">
    <location>
        <begin position="308"/>
        <end position="310"/>
    </location>
</feature>
<feature type="strand" evidence="12">
    <location>
        <begin position="312"/>
        <end position="340"/>
    </location>
</feature>
<feature type="helix" evidence="12">
    <location>
        <begin position="346"/>
        <end position="351"/>
    </location>
</feature>
<feature type="strand" evidence="12">
    <location>
        <begin position="358"/>
        <end position="367"/>
    </location>
</feature>
<sequence>MKVKVLSLLVPALLVAGAANAAEVYNKDGNKLDLYGKVDGLHYFSDNKDVDGDQTYMRLGFKGETQVTDQLTGYGQWEYQIQGNSAENENNSWTRVAFAGLKFQDVGSFDYGRNYGVVYDVTSWTDVLPEFGGDTYGSDNFMQQRGNGFATYRNTDFFGLVDGLNFAVQYQGKNGNPSGEGFTSGVTNNGRDALRQNGDGVGGSITYDYEGFGIGGAISSSKRTDAQNTAAYIGNGDRAETYTGGLKYDANNIYLAAQYTQTYNATRVGSLGWANKAQNFEAVAQYQFDFGLRPSLAYLQSKGKNLGRGYDDEDILKYVDVGATYYFNKNMSTYVDYKINLLDDNQFTRDAGINTDNIVALGLVYQF</sequence>
<organism>
    <name type="scientific">Escherichia coli (strain K12)</name>
    <dbReference type="NCBI Taxonomy" id="83333"/>
    <lineage>
        <taxon>Bacteria</taxon>
        <taxon>Pseudomonadati</taxon>
        <taxon>Pseudomonadota</taxon>
        <taxon>Gammaproteobacteria</taxon>
        <taxon>Enterobacterales</taxon>
        <taxon>Enterobacteriaceae</taxon>
        <taxon>Escherichia</taxon>
    </lineage>
</organism>
<accession>P06996</accession>
<reference key="1">
    <citation type="journal article" date="1983" name="J. Biol. Chem.">
        <title>A comparative study on the genes for three porins of the Escherichia coli outer membrane. DNA sequence of the osmoregulated ompC gene.</title>
        <authorList>
            <person name="Mizuno T."/>
            <person name="Chou M.-Y."/>
            <person name="Inouye M."/>
        </authorList>
    </citation>
    <scope>NUCLEOTIDE SEQUENCE [GENOMIC DNA]</scope>
</reference>
<reference key="2">
    <citation type="journal article" date="1996" name="DNA Res.">
        <title>A 460-kb DNA sequence of the Escherichia coli K-12 genome corresponding to the 40.1-50.0 min region on the linkage map.</title>
        <authorList>
            <person name="Itoh T."/>
            <person name="Aiba H."/>
            <person name="Baba T."/>
            <person name="Fujita K."/>
            <person name="Hayashi K."/>
            <person name="Inada T."/>
            <person name="Isono K."/>
            <person name="Kasai H."/>
            <person name="Kimura S."/>
            <person name="Kitakawa M."/>
            <person name="Kitagawa M."/>
            <person name="Makino K."/>
            <person name="Miki T."/>
            <person name="Mizobuchi K."/>
            <person name="Mori H."/>
            <person name="Mori T."/>
            <person name="Motomura K."/>
            <person name="Nakade S."/>
            <person name="Nakamura Y."/>
            <person name="Nashimoto H."/>
            <person name="Nishio Y."/>
            <person name="Oshima T."/>
            <person name="Saito N."/>
            <person name="Sampei G."/>
            <person name="Seki Y."/>
            <person name="Sivasundaram S."/>
            <person name="Tagami H."/>
            <person name="Takeda J."/>
            <person name="Takemoto K."/>
            <person name="Wada C."/>
            <person name="Yamamoto Y."/>
            <person name="Horiuchi T."/>
        </authorList>
    </citation>
    <scope>NUCLEOTIDE SEQUENCE [LARGE SCALE GENOMIC DNA]</scope>
    <source>
        <strain>K12 / W3110 / ATCC 27325 / DSM 5911</strain>
    </source>
</reference>
<reference key="3">
    <citation type="journal article" date="1997" name="Science">
        <title>The complete genome sequence of Escherichia coli K-12.</title>
        <authorList>
            <person name="Blattner F.R."/>
            <person name="Plunkett G. III"/>
            <person name="Bloch C.A."/>
            <person name="Perna N.T."/>
            <person name="Burland V."/>
            <person name="Riley M."/>
            <person name="Collado-Vides J."/>
            <person name="Glasner J.D."/>
            <person name="Rode C.K."/>
            <person name="Mayhew G.F."/>
            <person name="Gregor J."/>
            <person name="Davis N.W."/>
            <person name="Kirkpatrick H.A."/>
            <person name="Goeden M.A."/>
            <person name="Rose D.J."/>
            <person name="Mau B."/>
            <person name="Shao Y."/>
        </authorList>
    </citation>
    <scope>NUCLEOTIDE SEQUENCE [LARGE SCALE GENOMIC DNA]</scope>
    <source>
        <strain>K12 / MG1655 / ATCC 47076</strain>
    </source>
</reference>
<reference key="4">
    <citation type="journal article" date="2006" name="Mol. Syst. Biol.">
        <title>Highly accurate genome sequences of Escherichia coli K-12 strains MG1655 and W3110.</title>
        <authorList>
            <person name="Hayashi K."/>
            <person name="Morooka N."/>
            <person name="Yamamoto Y."/>
            <person name="Fujita K."/>
            <person name="Isono K."/>
            <person name="Choi S."/>
            <person name="Ohtsubo E."/>
            <person name="Baba T."/>
            <person name="Wanner B.L."/>
            <person name="Mori H."/>
            <person name="Horiuchi T."/>
        </authorList>
    </citation>
    <scope>NUCLEOTIDE SEQUENCE [LARGE SCALE GENOMIC DNA]</scope>
    <source>
        <strain>K12 / W3110 / ATCC 27325 / DSM 5911</strain>
    </source>
</reference>
<reference key="5">
    <citation type="submission" date="1993-10" db="EMBL/GenBank/DDBJ databases">
        <title>Automated multiplex sequencing of the E.coli genome.</title>
        <authorList>
            <person name="Richterich P."/>
            <person name="Lakey N."/>
            <person name="Gryan G."/>
            <person name="Jaehn L."/>
            <person name="Mintz L."/>
            <person name="Robison K."/>
            <person name="Church G.M."/>
        </authorList>
    </citation>
    <scope>NUCLEOTIDE SEQUENCE [LARGE SCALE GENOMIC DNA] OF 218-367</scope>
    <source>
        <strain>K12 / BHB2600</strain>
    </source>
</reference>
<reference key="6">
    <citation type="journal article" date="1983" name="FEBS Lett.">
        <title>DNA sequence of the promoter region of the ompC gene and the amino acid sequence of the signal peptide of pro-OmpC protein of Escherichia coli.</title>
        <authorList>
            <person name="Mizuno T."/>
            <person name="Chou M.-Y."/>
            <person name="Inouye M."/>
        </authorList>
    </citation>
    <scope>NUCLEOTIDE SEQUENCE [GENOMIC DNA] OF 1-22</scope>
    <scope>PROTEIN SEQUENCE OF 22-40</scope>
</reference>
<reference key="7">
    <citation type="journal article" date="1985" name="J. Bacteriol.">
        <title>Construction of a series of ompF-ompC chimeric genes by in vivo homologous recombination in Escherichia coli and characterization of the translational products.</title>
        <authorList>
            <person name="Nogami T."/>
            <person name="Mizuno T."/>
            <person name="Mizushima S."/>
        </authorList>
    </citation>
    <scope>NUCLEOTIDE SEQUENCE [GENOMIC DNA] OF 32-57</scope>
</reference>
<reference key="8">
    <citation type="journal article" date="1997" name="Electrophoresis">
        <title>Comparing the predicted and observed properties of proteins encoded in the genome of Escherichia coli K-12.</title>
        <authorList>
            <person name="Link A.J."/>
            <person name="Robison K."/>
            <person name="Church G.M."/>
        </authorList>
    </citation>
    <scope>PROTEIN SEQUENCE OF 22-30</scope>
    <source>
        <strain>K12 / EMG2</strain>
    </source>
</reference>
<reference key="9">
    <citation type="journal article" date="1998" name="Electrophoresis">
        <title>Extraction of membrane proteins by differential solubilization for separation using two-dimensional gel electrophoresis.</title>
        <authorList>
            <person name="Molloy M.P."/>
            <person name="Herbert B.R."/>
            <person name="Walsh B.J."/>
            <person name="Tyler M.I."/>
            <person name="Traini M."/>
            <person name="Sanchez J.-C."/>
            <person name="Hochstrasser D.F."/>
            <person name="Williams K.L."/>
            <person name="Gooley A.A."/>
        </authorList>
    </citation>
    <scope>PROTEIN SEQUENCE OF 22-26</scope>
    <source>
        <strain>K12 / W3110 / ATCC 27325 / DSM 5911</strain>
    </source>
</reference>
<reference key="10">
    <citation type="journal article" date="1986" name="Mol. Gen. Genet.">
        <title>Molecular analysis of mutant ompR genes exhibiting different phenotypes as to osmoregulation of the ompF and ompC genes of Escherichia coli.</title>
        <authorList>
            <person name="Nara F."/>
            <person name="Matsuyama S."/>
            <person name="Mizuno T."/>
            <person name="Mizushima S."/>
        </authorList>
    </citation>
    <scope>INDUCTION BY HIGH OSMOLARITY</scope>
    <source>
        <strain>K12</strain>
    </source>
</reference>
<reference key="11">
    <citation type="journal article" date="1989" name="J. Biol. Chem.">
        <title>Existence and purification of porin heterotrimers of Escherichia coli K12 OmpC, OmpF, and PhoE proteins.</title>
        <authorList>
            <person name="Gehring K.B."/>
            <person name="Nikaido H."/>
        </authorList>
    </citation>
    <scope>SUBUNIT</scope>
    <scope>SUBCELLULAR LOCATION</scope>
    <scope>INDUCTION BY HIGH OSMOLARITY</scope>
    <source>
        <strain>K12 / JF568</strain>
    </source>
</reference>
<reference key="12">
    <citation type="journal article" date="1997" name="Electrophoresis">
        <title>Escherichia coli proteome analysis using the gene-protein database.</title>
        <authorList>
            <person name="VanBogelen R.A."/>
            <person name="Abshire K.Z."/>
            <person name="Moldover B."/>
            <person name="Olson E.R."/>
            <person name="Neidhardt F.C."/>
        </authorList>
    </citation>
    <scope>IDENTIFICATION BY 2D-GEL</scope>
</reference>
<reference key="13">
    <citation type="journal article" date="2016" name="PLoS Pathog.">
        <title>CdiA effectors from uropathogenic Escherichia coli use heterotrimeric osmoporins as receptors to recognize target bacteria.</title>
        <authorList>
            <person name="Beck C.M."/>
            <person name="Willett J.L."/>
            <person name="Cunningham D.A."/>
            <person name="Kim J.J."/>
            <person name="Low D.A."/>
            <person name="Hayes C.S."/>
        </authorList>
    </citation>
    <scope>FUNCTION (MICROBIAL INFECTION)</scope>
    <scope>DISRUPTION PHENOTYPE</scope>
    <source>
        <strain>K12</strain>
    </source>
</reference>
<reference key="14">
    <citation type="journal article" date="2017" name="FEBS Lett.">
        <title>Crystal structure of the EnvZ periplasmic domain with CHAPS.</title>
        <authorList>
            <person name="Hwang E."/>
            <person name="Cheong H.K."/>
            <person name="Kim S.Y."/>
            <person name="Kwon O."/>
            <person name="Blain K.Y."/>
            <person name="Choe S."/>
            <person name="Yeo K.J."/>
            <person name="Jung Y.W."/>
            <person name="Jeon Y.H."/>
            <person name="Cheong C."/>
        </authorList>
    </citation>
    <scope>INDUCTION</scope>
    <source>
        <strain>K12 / MC4100</strain>
    </source>
</reference>
<reference key="15">
    <citation type="journal article" date="2006" name="J. Mol. Biol.">
        <title>Crystal structure of osmoporin OmpC from E. coli at 2.0 A.</title>
        <authorList>
            <person name="Basle A."/>
            <person name="Rummel G."/>
            <person name="Storici P."/>
            <person name="Rosenbusch J.P."/>
            <person name="Schirmer T."/>
        </authorList>
    </citation>
    <scope>X-RAY CRYSTALLOGRAPHY (2.0 ANGSTROMS) OF 22-367 IN COMPLEX WITH MG(2+)</scope>
    <scope>SUBUNIT</scope>
    <scope>DOMAIN</scope>
    <scope>TOPOLOGY</scope>
</reference>
<reference key="16">
    <citation type="submission" date="2006-09" db="PDB data bank">
        <title>Crystal structure of the membrane protein Ompc complex with antibacterial lactoferrin.</title>
        <authorList>
            <person name="Baalaji S."/>
            <person name="Acharya R.K."/>
            <person name="Singh T.P."/>
            <person name="Krishnaswamy S."/>
        </authorList>
    </citation>
    <scope>X-RAY CRYSTALLOGRAPHY (2.99 ANGSTROMS) OF 22-367</scope>
</reference>
<proteinExistence type="evidence at protein level"/>
<name>OMPC_ECOLI</name>
<keyword id="KW-0002">3D-structure</keyword>
<keyword id="KW-0998">Cell outer membrane</keyword>
<keyword id="KW-0903">Direct protein sequencing</keyword>
<keyword id="KW-0406">Ion transport</keyword>
<keyword id="KW-0460">Magnesium</keyword>
<keyword id="KW-0472">Membrane</keyword>
<keyword id="KW-0479">Metal-binding</keyword>
<keyword id="KW-0626">Porin</keyword>
<keyword id="KW-1185">Reference proteome</keyword>
<keyword id="KW-0732">Signal</keyword>
<keyword id="KW-0346">Stress response</keyword>
<keyword id="KW-0812">Transmembrane</keyword>
<keyword id="KW-1134">Transmembrane beta strand</keyword>
<keyword id="KW-0813">Transport</keyword>
<protein>
    <recommendedName>
        <fullName>Outer membrane porin C</fullName>
    </recommendedName>
    <alternativeName>
        <fullName>Outer membrane protein 1B</fullName>
    </alternativeName>
    <alternativeName>
        <fullName>Outer membrane protein C</fullName>
    </alternativeName>
    <alternativeName>
        <fullName>Porin OmpC</fullName>
    </alternativeName>
</protein>
<gene>
    <name type="primary">ompC</name>
    <name type="synonym">meoA</name>
    <name type="synonym">par</name>
    <name type="ordered locus">b2215</name>
    <name type="ordered locus">JW2203</name>
</gene>